<gene>
    <name evidence="1" type="primary">rpoB</name>
</gene>
<evidence type="ECO:0000255" key="1">
    <source>
        <dbReference type="HAMAP-Rule" id="MF_01321"/>
    </source>
</evidence>
<protein>
    <recommendedName>
        <fullName evidence="1">DNA-directed RNA polymerase subunit beta</fullName>
        <ecNumber evidence="1">2.7.7.6</ecNumber>
    </recommendedName>
    <alternativeName>
        <fullName evidence="1">PEP</fullName>
    </alternativeName>
    <alternativeName>
        <fullName evidence="1">Plastid-encoded RNA polymerase subunit beta</fullName>
        <shortName evidence="1">RNA polymerase subunit beta</shortName>
    </alternativeName>
</protein>
<feature type="chain" id="PRO_0000276598" description="DNA-directed RNA polymerase subunit beta">
    <location>
        <begin position="1"/>
        <end position="1070"/>
    </location>
</feature>
<proteinExistence type="inferred from homology"/>
<name>RPOB_VITVI</name>
<organism>
    <name type="scientific">Vitis vinifera</name>
    <name type="common">Grape</name>
    <dbReference type="NCBI Taxonomy" id="29760"/>
    <lineage>
        <taxon>Eukaryota</taxon>
        <taxon>Viridiplantae</taxon>
        <taxon>Streptophyta</taxon>
        <taxon>Embryophyta</taxon>
        <taxon>Tracheophyta</taxon>
        <taxon>Spermatophyta</taxon>
        <taxon>Magnoliopsida</taxon>
        <taxon>eudicotyledons</taxon>
        <taxon>Gunneridae</taxon>
        <taxon>Pentapetalae</taxon>
        <taxon>rosids</taxon>
        <taxon>Vitales</taxon>
        <taxon>Vitaceae</taxon>
        <taxon>Viteae</taxon>
        <taxon>Vitis</taxon>
    </lineage>
</organism>
<keyword id="KW-0150">Chloroplast</keyword>
<keyword id="KW-0240">DNA-directed RNA polymerase</keyword>
<keyword id="KW-0548">Nucleotidyltransferase</keyword>
<keyword id="KW-0934">Plastid</keyword>
<keyword id="KW-1185">Reference proteome</keyword>
<keyword id="KW-0804">Transcription</keyword>
<keyword id="KW-0808">Transferase</keyword>
<accession>Q0ZJ28</accession>
<sequence length="1070" mass="120544">MFRGGNEGMSTIPGFNQIQFEGFCRFIDQGLTEELYKFPKIEDTDQEIEFQLFVETYQLVEPLIKERDAVYESLTYSSELYVSAGLIWKTSRDMQEQTIFIGNIPLMNSLGTSIVNGLYRIVINQILQSPGIYYRSELDHNGISVYTGTIVSDWGGRLELEIDRKARIWARVSRKQKISILVLSSAMGSNLREILENVCYPEIFLSFLNDKEKKKIGSKESAILEFYQQFACVGGDPVFSESLCKELQKKFFQQRCELGRIGRRNINRRLNLDIPQNNTFLLPQDILAAADHLIGMKFGMGILDDMNHLKNKRIRSVADLLQDQFGLALIRLENVVRGTICGAIRHKLIPTPQNLVTSTPVTTTYESFFGLHPLSQVLDRTNPLTQIVHGRKSSYLGPGGLTGRTASFRIRDIHPSHYGRICPIDTSEGINVGLIGSLAIHARIGHWGSLESPFYEISERSKKVRMLYLSPSRDEYYMVAAGNSLALNQGIQEEQVVPARYRQEFLTIAWEQVHLRSIFPFQYFSIGASLIPFIEHNDANRALMSSNMQRQAVPLSRSEKCIVGTGLERQAALDSGVPVIAEHEGKIVYTDTDKIILSGNGDTLSIPLVMYQRSNKNTCMHQKAQVRRGKCIKKGQILADGAATVGGELALGKNVLVAYMPWEGYNSEDAVLISERLVYGDIYTSFHIRKYEIQTHVTSQGPERITNKIPHLEAHLLRNLDKNGIVILGSWVETGDILVGKLTPQMAKESSYAPEDRLLRAILGIQVSTSKETCLKLPIGGRGRVIDVRWIQKKGGSSYNPETIRVYISQKREIKVGDKVAGRHGNKGIISKILPRQDMPYLQDGRPVDMVFNPLGVPSRMNVGQIFECSLGLAGGLLDRHYRIAPFDEKYEQEASRKLVFSELYEASKQTANPWVFEPEYPGKSRIFDGRTGDPFEQPVIIGKPYILKLIHQVDDKIHGRSSGHYALVTQQPLRGRAKQGGQRVGEMEVWALEGFGVAHILQEMLTYKSDHIRARQEVLGTTIIGGTIPNPEDAPESFRLLVRELRSLALELNHFLVSEKNFQINRKEA</sequence>
<dbReference type="EC" id="2.7.7.6" evidence="1"/>
<dbReference type="EMBL" id="DQ424856">
    <property type="protein sequence ID" value="ABE47526.1"/>
    <property type="molecule type" value="Genomic_DNA"/>
</dbReference>
<dbReference type="RefSeq" id="YP_567068.1">
    <property type="nucleotide sequence ID" value="NC_007957.1"/>
</dbReference>
<dbReference type="SMR" id="Q0ZJ28"/>
<dbReference type="FunCoup" id="Q0ZJ28">
    <property type="interactions" value="222"/>
</dbReference>
<dbReference type="STRING" id="29760.Q0ZJ28"/>
<dbReference type="PaxDb" id="29760-VIT_04s0079g00620.t01"/>
<dbReference type="GeneID" id="4025099"/>
<dbReference type="KEGG" id="vvi:4025099"/>
<dbReference type="eggNOG" id="KOG0214">
    <property type="taxonomic scope" value="Eukaryota"/>
</dbReference>
<dbReference type="InParanoid" id="Q0ZJ28"/>
<dbReference type="OrthoDB" id="183912at71240"/>
<dbReference type="Proteomes" id="UP000009183">
    <property type="component" value="Chloroplast"/>
</dbReference>
<dbReference type="ExpressionAtlas" id="Q0ZJ28">
    <property type="expression patterns" value="baseline and differential"/>
</dbReference>
<dbReference type="GO" id="GO:0009507">
    <property type="term" value="C:chloroplast"/>
    <property type="evidence" value="ECO:0007669"/>
    <property type="project" value="UniProtKB-SubCell"/>
</dbReference>
<dbReference type="GO" id="GO:0000428">
    <property type="term" value="C:DNA-directed RNA polymerase complex"/>
    <property type="evidence" value="ECO:0007669"/>
    <property type="project" value="UniProtKB-KW"/>
</dbReference>
<dbReference type="GO" id="GO:0005739">
    <property type="term" value="C:mitochondrion"/>
    <property type="evidence" value="ECO:0007669"/>
    <property type="project" value="GOC"/>
</dbReference>
<dbReference type="GO" id="GO:0003677">
    <property type="term" value="F:DNA binding"/>
    <property type="evidence" value="ECO:0007669"/>
    <property type="project" value="UniProtKB-UniRule"/>
</dbReference>
<dbReference type="GO" id="GO:0003899">
    <property type="term" value="F:DNA-directed RNA polymerase activity"/>
    <property type="evidence" value="ECO:0007669"/>
    <property type="project" value="UniProtKB-UniRule"/>
</dbReference>
<dbReference type="GO" id="GO:0032549">
    <property type="term" value="F:ribonucleoside binding"/>
    <property type="evidence" value="ECO:0007669"/>
    <property type="project" value="InterPro"/>
</dbReference>
<dbReference type="GO" id="GO:0006351">
    <property type="term" value="P:DNA-templated transcription"/>
    <property type="evidence" value="ECO:0007669"/>
    <property type="project" value="UniProtKB-UniRule"/>
</dbReference>
<dbReference type="CDD" id="cd00653">
    <property type="entry name" value="RNA_pol_B_RPB2"/>
    <property type="match status" value="1"/>
</dbReference>
<dbReference type="FunFam" id="3.90.1110.10:FF:000009">
    <property type="entry name" value="DNA-directed RNA polymerase subunit beta"/>
    <property type="match status" value="1"/>
</dbReference>
<dbReference type="Gene3D" id="2.40.50.100">
    <property type="match status" value="1"/>
</dbReference>
<dbReference type="Gene3D" id="2.40.50.150">
    <property type="match status" value="1"/>
</dbReference>
<dbReference type="Gene3D" id="3.90.1100.10">
    <property type="match status" value="1"/>
</dbReference>
<dbReference type="Gene3D" id="2.30.150.10">
    <property type="entry name" value="DNA-directed RNA polymerase, beta subunit, external 1 domain"/>
    <property type="match status" value="1"/>
</dbReference>
<dbReference type="Gene3D" id="2.40.270.10">
    <property type="entry name" value="DNA-directed RNA polymerase, subunit 2, domain 6"/>
    <property type="match status" value="1"/>
</dbReference>
<dbReference type="Gene3D" id="3.90.1800.10">
    <property type="entry name" value="RNA polymerase alpha subunit dimerisation domain"/>
    <property type="match status" value="1"/>
</dbReference>
<dbReference type="Gene3D" id="3.90.1110.10">
    <property type="entry name" value="RNA polymerase Rpb2, domain 2"/>
    <property type="match status" value="1"/>
</dbReference>
<dbReference type="HAMAP" id="MF_01321">
    <property type="entry name" value="RNApol_bact_RpoB"/>
    <property type="match status" value="1"/>
</dbReference>
<dbReference type="InterPro" id="IPR042107">
    <property type="entry name" value="DNA-dir_RNA_pol_bsu_ext_1_sf"/>
</dbReference>
<dbReference type="InterPro" id="IPR015712">
    <property type="entry name" value="DNA-dir_RNA_pol_su2"/>
</dbReference>
<dbReference type="InterPro" id="IPR007120">
    <property type="entry name" value="DNA-dir_RNAP_su2_dom"/>
</dbReference>
<dbReference type="InterPro" id="IPR037033">
    <property type="entry name" value="DNA-dir_RNAP_su2_hyb_sf"/>
</dbReference>
<dbReference type="InterPro" id="IPR010243">
    <property type="entry name" value="RNA_pol_bsu_bac"/>
</dbReference>
<dbReference type="InterPro" id="IPR007121">
    <property type="entry name" value="RNA_pol_bsu_CS"/>
</dbReference>
<dbReference type="InterPro" id="IPR007642">
    <property type="entry name" value="RNA_pol_Rpb2_2"/>
</dbReference>
<dbReference type="InterPro" id="IPR037034">
    <property type="entry name" value="RNA_pol_Rpb2_2_sf"/>
</dbReference>
<dbReference type="InterPro" id="IPR007645">
    <property type="entry name" value="RNA_pol_Rpb2_3"/>
</dbReference>
<dbReference type="InterPro" id="IPR007641">
    <property type="entry name" value="RNA_pol_Rpb2_7"/>
</dbReference>
<dbReference type="InterPro" id="IPR014724">
    <property type="entry name" value="RNA_pol_RPB2_OB-fold"/>
</dbReference>
<dbReference type="NCBIfam" id="NF001616">
    <property type="entry name" value="PRK00405.1"/>
    <property type="match status" value="1"/>
</dbReference>
<dbReference type="PANTHER" id="PTHR20856">
    <property type="entry name" value="DNA-DIRECTED RNA POLYMERASE I SUBUNIT 2"/>
    <property type="match status" value="1"/>
</dbReference>
<dbReference type="Pfam" id="PF04561">
    <property type="entry name" value="RNA_pol_Rpb2_2"/>
    <property type="match status" value="1"/>
</dbReference>
<dbReference type="Pfam" id="PF04565">
    <property type="entry name" value="RNA_pol_Rpb2_3"/>
    <property type="match status" value="1"/>
</dbReference>
<dbReference type="Pfam" id="PF00562">
    <property type="entry name" value="RNA_pol_Rpb2_6"/>
    <property type="match status" value="1"/>
</dbReference>
<dbReference type="Pfam" id="PF04560">
    <property type="entry name" value="RNA_pol_Rpb2_7"/>
    <property type="match status" value="1"/>
</dbReference>
<dbReference type="SUPFAM" id="SSF64484">
    <property type="entry name" value="beta and beta-prime subunits of DNA dependent RNA-polymerase"/>
    <property type="match status" value="1"/>
</dbReference>
<dbReference type="PROSITE" id="PS01166">
    <property type="entry name" value="RNA_POL_BETA"/>
    <property type="match status" value="1"/>
</dbReference>
<reference key="1">
    <citation type="journal article" date="2006" name="BMC Evol. Biol.">
        <title>Phylogenetic analyses of Vitis (Vitaceae) based on complete chloroplast genome sequences: effects of taxon sampling and phylogenetic methods on resolving relationships among rosids.</title>
        <authorList>
            <person name="Jansen R.K."/>
            <person name="Kaittanis C."/>
            <person name="Lee S.-B."/>
            <person name="Saski C."/>
            <person name="Tomkins J."/>
            <person name="Alverson A.J."/>
            <person name="Daniell H."/>
        </authorList>
    </citation>
    <scope>NUCLEOTIDE SEQUENCE [LARGE SCALE GENOMIC DNA]</scope>
    <source>
        <strain>cv. Maxxa</strain>
    </source>
</reference>
<comment type="function">
    <text evidence="1">DNA-dependent RNA polymerase catalyzes the transcription of DNA into RNA using the four ribonucleoside triphosphates as substrates.</text>
</comment>
<comment type="catalytic activity">
    <reaction evidence="1">
        <text>RNA(n) + a ribonucleoside 5'-triphosphate = RNA(n+1) + diphosphate</text>
        <dbReference type="Rhea" id="RHEA:21248"/>
        <dbReference type="Rhea" id="RHEA-COMP:14527"/>
        <dbReference type="Rhea" id="RHEA-COMP:17342"/>
        <dbReference type="ChEBI" id="CHEBI:33019"/>
        <dbReference type="ChEBI" id="CHEBI:61557"/>
        <dbReference type="ChEBI" id="CHEBI:140395"/>
        <dbReference type="EC" id="2.7.7.6"/>
    </reaction>
</comment>
<comment type="subunit">
    <text evidence="1">In plastids the minimal PEP RNA polymerase catalytic core is composed of four subunits: alpha, beta, beta', and beta''. When a (nuclear-encoded) sigma factor is associated with the core the holoenzyme is formed, which can initiate transcription.</text>
</comment>
<comment type="subcellular location">
    <subcellularLocation>
        <location>Plastid</location>
        <location>Chloroplast</location>
    </subcellularLocation>
</comment>
<comment type="similarity">
    <text evidence="1">Belongs to the RNA polymerase beta chain family.</text>
</comment>
<geneLocation type="chloroplast"/>